<evidence type="ECO:0000255" key="1">
    <source>
        <dbReference type="HAMAP-Rule" id="MF_00736"/>
    </source>
</evidence>
<evidence type="ECO:0000305" key="2"/>
<sequence>MARKINCYIKLQVKAGQANPAPPVGPALGQRGLNIMEFCKAFNAATSKLEPGLPTPVIITAYSDRTFTFVTKSTPASVLLKKAAGVTSGSKRPNTDKVGKVTRKQLEEIVKVKEADLTAADLEAAVRTIAGSARSMGLTVEG</sequence>
<gene>
    <name evidence="1" type="primary">rplK</name>
    <name type="ordered locus">XOO3596</name>
</gene>
<name>RL11_XANOR</name>
<accession>Q5GWS1</accession>
<dbReference type="EMBL" id="AE013598">
    <property type="protein sequence ID" value="AAW76850.1"/>
    <property type="molecule type" value="Genomic_DNA"/>
</dbReference>
<dbReference type="SMR" id="Q5GWS1"/>
<dbReference type="STRING" id="291331.XOO3596"/>
<dbReference type="KEGG" id="xoo:XOO3596"/>
<dbReference type="HOGENOM" id="CLU_074237_2_0_6"/>
<dbReference type="Proteomes" id="UP000006735">
    <property type="component" value="Chromosome"/>
</dbReference>
<dbReference type="GO" id="GO:0022625">
    <property type="term" value="C:cytosolic large ribosomal subunit"/>
    <property type="evidence" value="ECO:0007669"/>
    <property type="project" value="TreeGrafter"/>
</dbReference>
<dbReference type="GO" id="GO:0070180">
    <property type="term" value="F:large ribosomal subunit rRNA binding"/>
    <property type="evidence" value="ECO:0007669"/>
    <property type="project" value="UniProtKB-UniRule"/>
</dbReference>
<dbReference type="GO" id="GO:0003735">
    <property type="term" value="F:structural constituent of ribosome"/>
    <property type="evidence" value="ECO:0007669"/>
    <property type="project" value="InterPro"/>
</dbReference>
<dbReference type="GO" id="GO:0006412">
    <property type="term" value="P:translation"/>
    <property type="evidence" value="ECO:0007669"/>
    <property type="project" value="UniProtKB-UniRule"/>
</dbReference>
<dbReference type="CDD" id="cd00349">
    <property type="entry name" value="Ribosomal_L11"/>
    <property type="match status" value="1"/>
</dbReference>
<dbReference type="FunFam" id="1.10.10.250:FF:000001">
    <property type="entry name" value="50S ribosomal protein L11"/>
    <property type="match status" value="1"/>
</dbReference>
<dbReference type="FunFam" id="3.30.1550.10:FF:000001">
    <property type="entry name" value="50S ribosomal protein L11"/>
    <property type="match status" value="1"/>
</dbReference>
<dbReference type="Gene3D" id="1.10.10.250">
    <property type="entry name" value="Ribosomal protein L11, C-terminal domain"/>
    <property type="match status" value="1"/>
</dbReference>
<dbReference type="Gene3D" id="3.30.1550.10">
    <property type="entry name" value="Ribosomal protein L11/L12, N-terminal domain"/>
    <property type="match status" value="1"/>
</dbReference>
<dbReference type="HAMAP" id="MF_00736">
    <property type="entry name" value="Ribosomal_uL11"/>
    <property type="match status" value="1"/>
</dbReference>
<dbReference type="InterPro" id="IPR000911">
    <property type="entry name" value="Ribosomal_uL11"/>
</dbReference>
<dbReference type="InterPro" id="IPR006519">
    <property type="entry name" value="Ribosomal_uL11_bac-typ"/>
</dbReference>
<dbReference type="InterPro" id="IPR020783">
    <property type="entry name" value="Ribosomal_uL11_C"/>
</dbReference>
<dbReference type="InterPro" id="IPR036769">
    <property type="entry name" value="Ribosomal_uL11_C_sf"/>
</dbReference>
<dbReference type="InterPro" id="IPR020785">
    <property type="entry name" value="Ribosomal_uL11_CS"/>
</dbReference>
<dbReference type="InterPro" id="IPR020784">
    <property type="entry name" value="Ribosomal_uL11_N"/>
</dbReference>
<dbReference type="InterPro" id="IPR036796">
    <property type="entry name" value="Ribosomal_uL11_N_sf"/>
</dbReference>
<dbReference type="NCBIfam" id="TIGR01632">
    <property type="entry name" value="L11_bact"/>
    <property type="match status" value="1"/>
</dbReference>
<dbReference type="PANTHER" id="PTHR11661">
    <property type="entry name" value="60S RIBOSOMAL PROTEIN L12"/>
    <property type="match status" value="1"/>
</dbReference>
<dbReference type="PANTHER" id="PTHR11661:SF1">
    <property type="entry name" value="LARGE RIBOSOMAL SUBUNIT PROTEIN UL11M"/>
    <property type="match status" value="1"/>
</dbReference>
<dbReference type="Pfam" id="PF00298">
    <property type="entry name" value="Ribosomal_L11"/>
    <property type="match status" value="1"/>
</dbReference>
<dbReference type="Pfam" id="PF03946">
    <property type="entry name" value="Ribosomal_L11_N"/>
    <property type="match status" value="1"/>
</dbReference>
<dbReference type="SMART" id="SM00649">
    <property type="entry name" value="RL11"/>
    <property type="match status" value="1"/>
</dbReference>
<dbReference type="SUPFAM" id="SSF54747">
    <property type="entry name" value="Ribosomal L11/L12e N-terminal domain"/>
    <property type="match status" value="1"/>
</dbReference>
<dbReference type="SUPFAM" id="SSF46906">
    <property type="entry name" value="Ribosomal protein L11, C-terminal domain"/>
    <property type="match status" value="1"/>
</dbReference>
<dbReference type="PROSITE" id="PS00359">
    <property type="entry name" value="RIBOSOMAL_L11"/>
    <property type="match status" value="1"/>
</dbReference>
<comment type="function">
    <text evidence="1">Forms part of the ribosomal stalk which helps the ribosome interact with GTP-bound translation factors.</text>
</comment>
<comment type="subunit">
    <text evidence="1">Part of the ribosomal stalk of the 50S ribosomal subunit. Interacts with L10 and the large rRNA to form the base of the stalk. L10 forms an elongated spine to which L12 dimers bind in a sequential fashion forming a multimeric L10(L12)X complex.</text>
</comment>
<comment type="PTM">
    <text evidence="1">One or more lysine residues are methylated.</text>
</comment>
<comment type="similarity">
    <text evidence="1">Belongs to the universal ribosomal protein uL11 family.</text>
</comment>
<keyword id="KW-0488">Methylation</keyword>
<keyword id="KW-1185">Reference proteome</keyword>
<keyword id="KW-0687">Ribonucleoprotein</keyword>
<keyword id="KW-0689">Ribosomal protein</keyword>
<keyword id="KW-0694">RNA-binding</keyword>
<keyword id="KW-0699">rRNA-binding</keyword>
<organism>
    <name type="scientific">Xanthomonas oryzae pv. oryzae (strain KACC10331 / KXO85)</name>
    <dbReference type="NCBI Taxonomy" id="291331"/>
    <lineage>
        <taxon>Bacteria</taxon>
        <taxon>Pseudomonadati</taxon>
        <taxon>Pseudomonadota</taxon>
        <taxon>Gammaproteobacteria</taxon>
        <taxon>Lysobacterales</taxon>
        <taxon>Lysobacteraceae</taxon>
        <taxon>Xanthomonas</taxon>
    </lineage>
</organism>
<reference key="1">
    <citation type="journal article" date="2005" name="Nucleic Acids Res.">
        <title>The genome sequence of Xanthomonas oryzae pathovar oryzae KACC10331, the bacterial blight pathogen of rice.</title>
        <authorList>
            <person name="Lee B.-M."/>
            <person name="Park Y.-J."/>
            <person name="Park D.-S."/>
            <person name="Kang H.-W."/>
            <person name="Kim J.-G."/>
            <person name="Song E.-S."/>
            <person name="Park I.-C."/>
            <person name="Yoon U.-H."/>
            <person name="Hahn J.-H."/>
            <person name="Koo B.-S."/>
            <person name="Lee G.-B."/>
            <person name="Kim H."/>
            <person name="Park H.-S."/>
            <person name="Yoon K.-O."/>
            <person name="Kim J.-H."/>
            <person name="Jung C.-H."/>
            <person name="Koh N.-H."/>
            <person name="Seo J.-S."/>
            <person name="Go S.-J."/>
        </authorList>
    </citation>
    <scope>NUCLEOTIDE SEQUENCE [LARGE SCALE GENOMIC DNA]</scope>
    <source>
        <strain>KACC10331 / KXO85</strain>
    </source>
</reference>
<protein>
    <recommendedName>
        <fullName evidence="1">Large ribosomal subunit protein uL11</fullName>
    </recommendedName>
    <alternativeName>
        <fullName evidence="2">50S ribosomal protein L11</fullName>
    </alternativeName>
</protein>
<feature type="chain" id="PRO_0000258241" description="Large ribosomal subunit protein uL11">
    <location>
        <begin position="1"/>
        <end position="142"/>
    </location>
</feature>
<proteinExistence type="inferred from homology"/>